<dbReference type="EC" id="6.3.4.4" evidence="2"/>
<dbReference type="EMBL" id="U49388">
    <property type="protein sequence ID" value="AAB16830.1"/>
    <property type="molecule type" value="mRNA"/>
</dbReference>
<dbReference type="PIR" id="T03984">
    <property type="entry name" value="T03984"/>
</dbReference>
<dbReference type="RefSeq" id="NP_001105386.1">
    <property type="nucleotide sequence ID" value="NM_001111916.1"/>
</dbReference>
<dbReference type="SMR" id="O24578"/>
<dbReference type="FunCoup" id="O24578">
    <property type="interactions" value="3140"/>
</dbReference>
<dbReference type="STRING" id="4577.O24578"/>
<dbReference type="PaxDb" id="4577-GRMZM2G119852_P01"/>
<dbReference type="GeneID" id="542334"/>
<dbReference type="KEGG" id="zma:542334"/>
<dbReference type="eggNOG" id="KOG1355">
    <property type="taxonomic scope" value="Eukaryota"/>
</dbReference>
<dbReference type="InParanoid" id="O24578"/>
<dbReference type="OrthoDB" id="10265645at2759"/>
<dbReference type="SABIO-RK" id="O24578"/>
<dbReference type="UniPathway" id="UPA00075">
    <property type="reaction ID" value="UER00335"/>
</dbReference>
<dbReference type="Proteomes" id="UP000007305">
    <property type="component" value="Unplaced"/>
</dbReference>
<dbReference type="ExpressionAtlas" id="O24578">
    <property type="expression patterns" value="baseline and differential"/>
</dbReference>
<dbReference type="GO" id="GO:0009507">
    <property type="term" value="C:chloroplast"/>
    <property type="evidence" value="ECO:0007669"/>
    <property type="project" value="UniProtKB-SubCell"/>
</dbReference>
<dbReference type="GO" id="GO:0005737">
    <property type="term" value="C:cytoplasm"/>
    <property type="evidence" value="ECO:0000318"/>
    <property type="project" value="GO_Central"/>
</dbReference>
<dbReference type="GO" id="GO:0004019">
    <property type="term" value="F:adenylosuccinate synthase activity"/>
    <property type="evidence" value="ECO:0000318"/>
    <property type="project" value="GO_Central"/>
</dbReference>
<dbReference type="GO" id="GO:0005525">
    <property type="term" value="F:GTP binding"/>
    <property type="evidence" value="ECO:0007669"/>
    <property type="project" value="UniProtKB-UniRule"/>
</dbReference>
<dbReference type="GO" id="GO:0000287">
    <property type="term" value="F:magnesium ion binding"/>
    <property type="evidence" value="ECO:0007669"/>
    <property type="project" value="UniProtKB-UniRule"/>
</dbReference>
<dbReference type="GO" id="GO:0044208">
    <property type="term" value="P:'de novo' AMP biosynthetic process"/>
    <property type="evidence" value="ECO:0000318"/>
    <property type="project" value="GO_Central"/>
</dbReference>
<dbReference type="GO" id="GO:0046040">
    <property type="term" value="P:IMP metabolic process"/>
    <property type="evidence" value="ECO:0000318"/>
    <property type="project" value="GO_Central"/>
</dbReference>
<dbReference type="CDD" id="cd03108">
    <property type="entry name" value="AdSS"/>
    <property type="match status" value="1"/>
</dbReference>
<dbReference type="FunFam" id="3.90.170.10:FF:000001">
    <property type="entry name" value="Adenylosuccinate synthetase"/>
    <property type="match status" value="1"/>
</dbReference>
<dbReference type="FunFam" id="1.10.300.10:FF:000002">
    <property type="entry name" value="Adenylosuccinate synthetase, chloroplastic"/>
    <property type="match status" value="1"/>
</dbReference>
<dbReference type="Gene3D" id="3.40.440.10">
    <property type="entry name" value="Adenylosuccinate Synthetase, subunit A, domain 1"/>
    <property type="match status" value="1"/>
</dbReference>
<dbReference type="Gene3D" id="1.10.300.10">
    <property type="entry name" value="Adenylosuccinate Synthetase, subunit A, domain 2"/>
    <property type="match status" value="1"/>
</dbReference>
<dbReference type="Gene3D" id="3.90.170.10">
    <property type="entry name" value="Adenylosuccinate Synthetase, subunit A, domain 3"/>
    <property type="match status" value="1"/>
</dbReference>
<dbReference type="HAMAP" id="MF_00011">
    <property type="entry name" value="Adenylosucc_synth"/>
    <property type="match status" value="1"/>
</dbReference>
<dbReference type="InterPro" id="IPR018220">
    <property type="entry name" value="Adenylosuccin_syn_GTP-bd"/>
</dbReference>
<dbReference type="InterPro" id="IPR033128">
    <property type="entry name" value="Adenylosuccin_syn_Lys_AS"/>
</dbReference>
<dbReference type="InterPro" id="IPR042109">
    <property type="entry name" value="Adenylosuccinate_synth_dom1"/>
</dbReference>
<dbReference type="InterPro" id="IPR042110">
    <property type="entry name" value="Adenylosuccinate_synth_dom2"/>
</dbReference>
<dbReference type="InterPro" id="IPR042111">
    <property type="entry name" value="Adenylosuccinate_synth_dom3"/>
</dbReference>
<dbReference type="InterPro" id="IPR001114">
    <property type="entry name" value="Adenylosuccinate_synthetase"/>
</dbReference>
<dbReference type="InterPro" id="IPR027417">
    <property type="entry name" value="P-loop_NTPase"/>
</dbReference>
<dbReference type="NCBIfam" id="NF002223">
    <property type="entry name" value="PRK01117.1"/>
    <property type="match status" value="1"/>
</dbReference>
<dbReference type="NCBIfam" id="TIGR00184">
    <property type="entry name" value="purA"/>
    <property type="match status" value="1"/>
</dbReference>
<dbReference type="PANTHER" id="PTHR11846">
    <property type="entry name" value="ADENYLOSUCCINATE SYNTHETASE"/>
    <property type="match status" value="1"/>
</dbReference>
<dbReference type="PANTHER" id="PTHR11846:SF19">
    <property type="entry name" value="ADENYLOSUCCINATE SYNTHETASE 1, CHLOROPLASTIC"/>
    <property type="match status" value="1"/>
</dbReference>
<dbReference type="Pfam" id="PF00709">
    <property type="entry name" value="Adenylsucc_synt"/>
    <property type="match status" value="1"/>
</dbReference>
<dbReference type="SMART" id="SM00788">
    <property type="entry name" value="Adenylsucc_synt"/>
    <property type="match status" value="1"/>
</dbReference>
<dbReference type="SUPFAM" id="SSF52540">
    <property type="entry name" value="P-loop containing nucleoside triphosphate hydrolases"/>
    <property type="match status" value="1"/>
</dbReference>
<dbReference type="PROSITE" id="PS01266">
    <property type="entry name" value="ADENYLOSUCCIN_SYN_1"/>
    <property type="match status" value="1"/>
</dbReference>
<dbReference type="PROSITE" id="PS00513">
    <property type="entry name" value="ADENYLOSUCCIN_SYN_2"/>
    <property type="match status" value="1"/>
</dbReference>
<organism>
    <name type="scientific">Zea mays</name>
    <name type="common">Maize</name>
    <dbReference type="NCBI Taxonomy" id="4577"/>
    <lineage>
        <taxon>Eukaryota</taxon>
        <taxon>Viridiplantae</taxon>
        <taxon>Streptophyta</taxon>
        <taxon>Embryophyta</taxon>
        <taxon>Tracheophyta</taxon>
        <taxon>Spermatophyta</taxon>
        <taxon>Magnoliopsida</taxon>
        <taxon>Liliopsida</taxon>
        <taxon>Poales</taxon>
        <taxon>Poaceae</taxon>
        <taxon>PACMAD clade</taxon>
        <taxon>Panicoideae</taxon>
        <taxon>Andropogonodae</taxon>
        <taxon>Andropogoneae</taxon>
        <taxon>Tripsacinae</taxon>
        <taxon>Zea</taxon>
    </lineage>
</organism>
<accession>O24578</accession>
<keyword id="KW-0150">Chloroplast</keyword>
<keyword id="KW-0342">GTP-binding</keyword>
<keyword id="KW-0436">Ligase</keyword>
<keyword id="KW-0460">Magnesium</keyword>
<keyword id="KW-0479">Metal-binding</keyword>
<keyword id="KW-0547">Nucleotide-binding</keyword>
<keyword id="KW-0934">Plastid</keyword>
<keyword id="KW-0658">Purine biosynthesis</keyword>
<keyword id="KW-1185">Reference proteome</keyword>
<keyword id="KW-0809">Transit peptide</keyword>
<evidence type="ECO:0000250" key="1"/>
<evidence type="ECO:0000255" key="2">
    <source>
        <dbReference type="HAMAP-Rule" id="MF_03125"/>
    </source>
</evidence>
<protein>
    <recommendedName>
        <fullName evidence="2">Adenylosuccinate synthetase, chloroplastic</fullName>
        <shortName evidence="2">AMPSase</shortName>
        <shortName evidence="2">AdSS</shortName>
        <ecNumber evidence="2">6.3.4.4</ecNumber>
    </recommendedName>
    <alternativeName>
        <fullName evidence="2">IMP--aspartate ligase</fullName>
    </alternativeName>
</protein>
<comment type="function">
    <text evidence="1">Plays an important role in the de novo pathway and in the salvage pathway of purine nucleotide biosynthesis. Catalyzes the first committed step in the biosynthesis of AMP from IMP (By similarity).</text>
</comment>
<comment type="catalytic activity">
    <reaction evidence="2">
        <text>IMP + L-aspartate + GTP = N(6)-(1,2-dicarboxyethyl)-AMP + GDP + phosphate + 2 H(+)</text>
        <dbReference type="Rhea" id="RHEA:15753"/>
        <dbReference type="ChEBI" id="CHEBI:15378"/>
        <dbReference type="ChEBI" id="CHEBI:29991"/>
        <dbReference type="ChEBI" id="CHEBI:37565"/>
        <dbReference type="ChEBI" id="CHEBI:43474"/>
        <dbReference type="ChEBI" id="CHEBI:57567"/>
        <dbReference type="ChEBI" id="CHEBI:58053"/>
        <dbReference type="ChEBI" id="CHEBI:58189"/>
        <dbReference type="EC" id="6.3.4.4"/>
    </reaction>
</comment>
<comment type="cofactor">
    <cofactor evidence="2">
        <name>Mg(2+)</name>
        <dbReference type="ChEBI" id="CHEBI:18420"/>
    </cofactor>
    <text evidence="2">Binds 1 Mg(2+) ion per subunit.</text>
</comment>
<comment type="pathway">
    <text evidence="2">Purine metabolism; AMP biosynthesis via de novo pathway; AMP from IMP: step 1/2.</text>
</comment>
<comment type="subunit">
    <text evidence="2">Homodimer.</text>
</comment>
<comment type="subcellular location">
    <subcellularLocation>
        <location>Plastid</location>
        <location>Chloroplast</location>
    </subcellularLocation>
</comment>
<comment type="similarity">
    <text evidence="2">Belongs to the adenylosuccinate synthetase family.</text>
</comment>
<name>PURA_MAIZE</name>
<sequence length="484" mass="51913">MSLSTLSHPAAAAAGSGKSLFPAGPAAQSVHFPKARLPVPAAVSAATAAVHAEDRVSSLTQVSGVLGSQWGDEGKGKLVDVLAPRFDIVARCQGGANAGHTIYNSEGKKFALHLVPSGILHEGTLCVVGNGAVIHVPGFFGEIDGLESNGVRCGGRILVSDRAHLLFDLHQAVDGLREAELENSFIGTTKRGIGPCYSSKVTRNGLRVCDLRHMDTFGDKLDILFKDAASRFQGFQYSKSLLKEEVERYKKFADRLEPFIADTVHVLNESIKQKKKILVEGGQATMLDIDFGTYPFVTSSSPSAGGICTGLGIAPRAIGDLIGVVKAYTSRVGSGPFPTELFGEEGDRLRKAGMEFGTTTGRPRRCGWLDIVALKHSCQINGFSSLNLTKLDVLSGLSEIKVGVSYTQTDGQKLQSFPGDLDTLEQVQVNYEVLPGWQSDISSVRRYDELPQAARLYVERIEELVGVPVHYIGVGPGRDALIYK</sequence>
<feature type="transit peptide" description="Chloroplast" evidence="2">
    <location>
        <begin position="1"/>
        <end position="44"/>
    </location>
</feature>
<feature type="chain" id="PRO_0000029871" description="Adenylosuccinate synthetase, chloroplastic">
    <location>
        <begin position="45"/>
        <end position="484"/>
    </location>
</feature>
<feature type="active site" description="Proton acceptor" evidence="2">
    <location>
        <position position="72"/>
    </location>
</feature>
<feature type="active site" description="Proton donor" evidence="2">
    <location>
        <position position="100"/>
    </location>
</feature>
<feature type="binding site" evidence="2">
    <location>
        <begin position="71"/>
        <end position="77"/>
    </location>
    <ligand>
        <name>GTP</name>
        <dbReference type="ChEBI" id="CHEBI:37565"/>
    </ligand>
</feature>
<feature type="binding site" description="in other chain" evidence="2">
    <location>
        <begin position="72"/>
        <end position="75"/>
    </location>
    <ligand>
        <name>IMP</name>
        <dbReference type="ChEBI" id="CHEBI:58053"/>
        <note>ligand shared between dimeric partners</note>
    </ligand>
</feature>
<feature type="binding site" evidence="2">
    <location>
        <position position="72"/>
    </location>
    <ligand>
        <name>Mg(2+)</name>
        <dbReference type="ChEBI" id="CHEBI:18420"/>
    </ligand>
</feature>
<feature type="binding site" description="in other chain" evidence="2">
    <location>
        <begin position="97"/>
        <end position="100"/>
    </location>
    <ligand>
        <name>IMP</name>
        <dbReference type="ChEBI" id="CHEBI:58053"/>
        <note>ligand shared between dimeric partners</note>
    </ligand>
</feature>
<feature type="binding site" evidence="2">
    <location>
        <begin position="99"/>
        <end position="101"/>
    </location>
    <ligand>
        <name>GTP</name>
        <dbReference type="ChEBI" id="CHEBI:37565"/>
    </ligand>
</feature>
<feature type="binding site" evidence="2">
    <location>
        <position position="99"/>
    </location>
    <ligand>
        <name>Mg(2+)</name>
        <dbReference type="ChEBI" id="CHEBI:18420"/>
    </ligand>
</feature>
<feature type="binding site" description="in other chain" evidence="2">
    <location>
        <position position="189"/>
    </location>
    <ligand>
        <name>IMP</name>
        <dbReference type="ChEBI" id="CHEBI:58053"/>
        <note>ligand shared between dimeric partners</note>
    </ligand>
</feature>
<feature type="binding site" evidence="2">
    <location>
        <position position="203"/>
    </location>
    <ligand>
        <name>IMP</name>
        <dbReference type="ChEBI" id="CHEBI:58053"/>
        <note>ligand shared between dimeric partners</note>
    </ligand>
</feature>
<feature type="binding site" description="in other chain" evidence="2">
    <location>
        <position position="283"/>
    </location>
    <ligand>
        <name>IMP</name>
        <dbReference type="ChEBI" id="CHEBI:58053"/>
        <note>ligand shared between dimeric partners</note>
    </ligand>
</feature>
<feature type="binding site" description="in other chain" evidence="2">
    <location>
        <position position="298"/>
    </location>
    <ligand>
        <name>IMP</name>
        <dbReference type="ChEBI" id="CHEBI:58053"/>
        <note>ligand shared between dimeric partners</note>
    </ligand>
</feature>
<feature type="binding site" evidence="2">
    <location>
        <begin position="358"/>
        <end position="364"/>
    </location>
    <ligand>
        <name>substrate</name>
    </ligand>
</feature>
<feature type="binding site" description="in other chain" evidence="2">
    <location>
        <position position="362"/>
    </location>
    <ligand>
        <name>IMP</name>
        <dbReference type="ChEBI" id="CHEBI:58053"/>
        <note>ligand shared between dimeric partners</note>
    </ligand>
</feature>
<feature type="binding site" evidence="2">
    <location>
        <position position="364"/>
    </location>
    <ligand>
        <name>GTP</name>
        <dbReference type="ChEBI" id="CHEBI:37565"/>
    </ligand>
</feature>
<feature type="binding site" evidence="2">
    <location>
        <begin position="390"/>
        <end position="392"/>
    </location>
    <ligand>
        <name>GTP</name>
        <dbReference type="ChEBI" id="CHEBI:37565"/>
    </ligand>
</feature>
<feature type="binding site" evidence="2">
    <location>
        <begin position="473"/>
        <end position="475"/>
    </location>
    <ligand>
        <name>GTP</name>
        <dbReference type="ChEBI" id="CHEBI:37565"/>
    </ligand>
</feature>
<proteinExistence type="evidence at transcript level"/>
<reference key="1">
    <citation type="journal article" date="1996" name="Proc. Natl. Acad. Sci. U.S.A.">
        <title>The mode of action and the structure of a herbicide in complex with its target: binding of activated hydantocidin to the feedback regulation site of adenylosuccinate synthetase.</title>
        <authorList>
            <person name="Fonne-Pfister R."/>
            <person name="Chemla P."/>
            <person name="Ward E."/>
            <person name="Girardet M."/>
            <person name="Kreuz K.E."/>
            <person name="Honzatko R.B."/>
            <person name="Fromm H.J."/>
            <person name="Schaer H.-P."/>
            <person name="Gruetter M.G."/>
            <person name="Cowan-Jacob S.W."/>
        </authorList>
    </citation>
    <scope>NUCLEOTIDE SEQUENCE [MRNA]</scope>
    <source>
        <strain>cv. Blizzard</strain>
    </source>
</reference>
<gene>
    <name evidence="2" type="primary">PURA</name>
</gene>